<feature type="chain" id="PRO_0000201464" description="Protein HoxT">
    <location>
        <begin position="1"/>
        <end position="179"/>
    </location>
</feature>
<reference key="1">
    <citation type="journal article" date="1992" name="J. Bacteriol.">
        <title>A gene complex coding for the membrane-bound hydrogenase of Alcaligenes eutrophus H16.</title>
        <authorList>
            <person name="Kortlueke C."/>
            <person name="Horstmann K."/>
            <person name="Schwartz E."/>
            <person name="Rohde M."/>
            <person name="Binsack R."/>
            <person name="Friedrich B."/>
        </authorList>
    </citation>
    <scope>NUCLEOTIDE SEQUENCE [GENOMIC DNA]</scope>
</reference>
<reference key="2">
    <citation type="journal article" date="2003" name="J. Mol. Biol.">
        <title>Complete nucleotide sequence of pHG1: a Ralstonia eutropha H16 megaplasmid encoding key enzymes of H(2)-based lithoautotrophy and anaerobiosis.</title>
        <authorList>
            <person name="Schwartz E."/>
            <person name="Henne A."/>
            <person name="Cramm R."/>
            <person name="Eitinger T."/>
            <person name="Friedrich B."/>
            <person name="Gottschalk G."/>
        </authorList>
    </citation>
    <scope>NUCLEOTIDE SEQUENCE [LARGE SCALE GENOMIC DNA]</scope>
    <source>
        <strain>ATCC 17699 / DSM 428 / KCTC 22496 / NCIMB 10442 / H16 / Stanier 337</strain>
    </source>
</reference>
<sequence length="179" mass="19713">MLLANYGACEVDRVRHLEEAFCCIAATRMADIPVVNRALSVEALGFEQCAESAGGSDGEMGILITPWFMNLIWLAPYGPCLGERDASTLPVGKTCMRRFGSHDFEFIGASEPQFGPYQFCSLFSPMFEFANQASARATATEVLRLLRASPDAPLPPTCAPHRDRRGFLFGRRRIEGESL</sequence>
<protein>
    <recommendedName>
        <fullName>Protein HoxT</fullName>
    </recommendedName>
</protein>
<dbReference type="EMBL" id="M96433">
    <property type="protein sequence ID" value="AAA16470.1"/>
    <property type="molecule type" value="Unassigned_DNA"/>
</dbReference>
<dbReference type="EMBL" id="AY305378">
    <property type="protein sequence ID" value="AAP85766.1"/>
    <property type="molecule type" value="Genomic_DNA"/>
</dbReference>
<dbReference type="RefSeq" id="WP_011153935.1">
    <property type="nucleotide sequence ID" value="NC_005241.1"/>
</dbReference>
<dbReference type="SMR" id="P31913"/>
<dbReference type="KEGG" id="reh:PHG010"/>
<dbReference type="eggNOG" id="COG1773">
    <property type="taxonomic scope" value="Bacteria"/>
</dbReference>
<dbReference type="HOGENOM" id="CLU_091699_1_0_4"/>
<dbReference type="OrthoDB" id="7060130at2"/>
<dbReference type="Proteomes" id="UP000008210">
    <property type="component" value="Plasmid megaplasmid pHG1"/>
</dbReference>
<dbReference type="Gene3D" id="3.30.1460.40">
    <property type="entry name" value="[NiFe]-hydrogenase assembly chaperone, HybE"/>
    <property type="match status" value="1"/>
</dbReference>
<dbReference type="InterPro" id="IPR023994">
    <property type="entry name" value="NiFe-hyd_HybE"/>
</dbReference>
<dbReference type="InterPro" id="IPR038530">
    <property type="entry name" value="NiFe-hyd_HybE_sf"/>
</dbReference>
<dbReference type="NCBIfam" id="TIGR03993">
    <property type="entry name" value="hydrog_HybE"/>
    <property type="match status" value="1"/>
</dbReference>
<dbReference type="Pfam" id="PF11939">
    <property type="entry name" value="NiFe-hyd_HybE"/>
    <property type="match status" value="1"/>
</dbReference>
<geneLocation type="plasmid">
    <name>megaplasmid pHG1</name>
</geneLocation>
<organism>
    <name type="scientific">Cupriavidus necator (strain ATCC 17699 / DSM 428 / KCTC 22496 / NCIMB 10442 / H16 / Stanier 337)</name>
    <name type="common">Ralstonia eutropha</name>
    <dbReference type="NCBI Taxonomy" id="381666"/>
    <lineage>
        <taxon>Bacteria</taxon>
        <taxon>Pseudomonadati</taxon>
        <taxon>Pseudomonadota</taxon>
        <taxon>Betaproteobacteria</taxon>
        <taxon>Burkholderiales</taxon>
        <taxon>Burkholderiaceae</taxon>
        <taxon>Cupriavidus</taxon>
    </lineage>
</organism>
<keyword id="KW-0614">Plasmid</keyword>
<keyword id="KW-1185">Reference proteome</keyword>
<name>HOXT_CUPNH</name>
<proteinExistence type="predicted"/>
<accession>P31913</accession>
<accession>Q44024</accession>
<gene>
    <name type="primary">hoxT</name>
    <name type="ordered locus">PHG010</name>
</gene>